<accession>Q6FRL4</accession>
<sequence length="676" mass="78731">MCIPENMWTPPTLPLPLQSFPKENIPIDKRTQKCLLQIKKLCSTQFSLNKEYKSTFNLIDYKLQRIIQPHNLSVNPINSFWPHTVERLVVPPIYYEMLSNQQIYTLDYLQINPQYHIPIKSVQKSKQKAFQLNLLPLPRQKFRQIQLESYMPSKLESKMTSICEESLPKTVIFDYHGYFDLKQKLLTSNTLLTARLNPISTSAGCRQKLKFTTHWPSWTIEINTDISNISRLHKVLFDENFNKIELFKLASCNLKVERSTRIKKNHIATWKLDKLQLKELDWDPLKKLKAYSVQKKINCDEVHAQATFIITPLKLVLMPINSSEIHILQNNYGNIVISAKSFGNLQPKNTIESSQVSNNNTKLLKEARTTGSSMSDRSTSITSYKCSSLVPEKRSLLDSNLISIVQLKKLRTSYPQSTESHSGEMSLLRLLHSNSCKTEIQQIDTWYDTAKLNTTPKTTSFKLEGQDIKKKVSIIANEYDISTTYQITRLLRERQYSNIEEYRIKLPCHFILSFSSCLLLVEISKVFQCITAGELFLERTLSILIKHFRVVHVFIEYEPNTELYDKDIFWKAKLILNNPQVRTIFIPKFSNNLTTWMLRVTTIQGQKFQEMVKDNTLSHFNINPYQEYLIQEKLRESSPSRLIETLVFGDHVLDGILTPIHINSLKIFARENWHLT</sequence>
<name>ZIP2_CANGA</name>
<reference key="1">
    <citation type="journal article" date="2004" name="Nature">
        <title>Genome evolution in yeasts.</title>
        <authorList>
            <person name="Dujon B."/>
            <person name="Sherman D."/>
            <person name="Fischer G."/>
            <person name="Durrens P."/>
            <person name="Casaregola S."/>
            <person name="Lafontaine I."/>
            <person name="de Montigny J."/>
            <person name="Marck C."/>
            <person name="Neuveglise C."/>
            <person name="Talla E."/>
            <person name="Goffard N."/>
            <person name="Frangeul L."/>
            <person name="Aigle M."/>
            <person name="Anthouard V."/>
            <person name="Babour A."/>
            <person name="Barbe V."/>
            <person name="Barnay S."/>
            <person name="Blanchin S."/>
            <person name="Beckerich J.-M."/>
            <person name="Beyne E."/>
            <person name="Bleykasten C."/>
            <person name="Boisrame A."/>
            <person name="Boyer J."/>
            <person name="Cattolico L."/>
            <person name="Confanioleri F."/>
            <person name="de Daruvar A."/>
            <person name="Despons L."/>
            <person name="Fabre E."/>
            <person name="Fairhead C."/>
            <person name="Ferry-Dumazet H."/>
            <person name="Groppi A."/>
            <person name="Hantraye F."/>
            <person name="Hennequin C."/>
            <person name="Jauniaux N."/>
            <person name="Joyet P."/>
            <person name="Kachouri R."/>
            <person name="Kerrest A."/>
            <person name="Koszul R."/>
            <person name="Lemaire M."/>
            <person name="Lesur I."/>
            <person name="Ma L."/>
            <person name="Muller H."/>
            <person name="Nicaud J.-M."/>
            <person name="Nikolski M."/>
            <person name="Oztas S."/>
            <person name="Ozier-Kalogeropoulos O."/>
            <person name="Pellenz S."/>
            <person name="Potier S."/>
            <person name="Richard G.-F."/>
            <person name="Straub M.-L."/>
            <person name="Suleau A."/>
            <person name="Swennen D."/>
            <person name="Tekaia F."/>
            <person name="Wesolowski-Louvel M."/>
            <person name="Westhof E."/>
            <person name="Wirth B."/>
            <person name="Zeniou-Meyer M."/>
            <person name="Zivanovic Y."/>
            <person name="Bolotin-Fukuhara M."/>
            <person name="Thierry A."/>
            <person name="Bouchier C."/>
            <person name="Caudron B."/>
            <person name="Scarpelli C."/>
            <person name="Gaillardin C."/>
            <person name="Weissenbach J."/>
            <person name="Wincker P."/>
            <person name="Souciet J.-L."/>
        </authorList>
    </citation>
    <scope>NUCLEOTIDE SEQUENCE [LARGE SCALE GENOMIC DNA]</scope>
    <source>
        <strain>ATCC 2001 / BCRC 20586 / JCM 3761 / NBRC 0622 / NRRL Y-65 / CBS 138</strain>
    </source>
</reference>
<comment type="function">
    <text evidence="1">Required for initiation of meiotic chromosome synapsis. Involved in synaptonemal complex formation, a structure that tethers a pair of homologous chromosomes along their lengths and plays a central role in recombination and homolog segregation during meiosis (By similarity).</text>
</comment>
<comment type="subcellular location">
    <subcellularLocation>
        <location evidence="1">Nucleus</location>
    </subcellularLocation>
    <subcellularLocation>
        <location evidence="1">Chromosome</location>
    </subcellularLocation>
    <text evidence="1">localizes to a meiosis specific chromosomal structure called the synaptonemal complex (SC) formed during meiotic prophase.</text>
</comment>
<comment type="similarity">
    <text evidence="2">Belongs to the ZIP2 family.</text>
</comment>
<organism>
    <name type="scientific">Candida glabrata (strain ATCC 2001 / BCRC 20586 / JCM 3761 / NBRC 0622 / NRRL Y-65 / CBS 138)</name>
    <name type="common">Yeast</name>
    <name type="synonym">Nakaseomyces glabratus</name>
    <dbReference type="NCBI Taxonomy" id="284593"/>
    <lineage>
        <taxon>Eukaryota</taxon>
        <taxon>Fungi</taxon>
        <taxon>Dikarya</taxon>
        <taxon>Ascomycota</taxon>
        <taxon>Saccharomycotina</taxon>
        <taxon>Saccharomycetes</taxon>
        <taxon>Saccharomycetales</taxon>
        <taxon>Saccharomycetaceae</taxon>
        <taxon>Nakaseomyces</taxon>
    </lineage>
</organism>
<gene>
    <name type="primary">ZIP2</name>
    <name type="ordered locus">CAGL0H07645g</name>
</gene>
<keyword id="KW-0131">Cell cycle</keyword>
<keyword id="KW-0160">Chromosomal rearrangement</keyword>
<keyword id="KW-0158">Chromosome</keyword>
<keyword id="KW-0159">Chromosome partition</keyword>
<keyword id="KW-0238">DNA-binding</keyword>
<keyword id="KW-0469">Meiosis</keyword>
<keyword id="KW-0547">Nucleotide-binding</keyword>
<keyword id="KW-0539">Nucleus</keyword>
<keyword id="KW-1185">Reference proteome</keyword>
<proteinExistence type="inferred from homology"/>
<evidence type="ECO:0000250" key="1"/>
<evidence type="ECO:0000305" key="2"/>
<feature type="chain" id="PRO_0000333498" description="Protein ZIP2">
    <location>
        <begin position="1"/>
        <end position="676"/>
    </location>
</feature>
<protein>
    <recommendedName>
        <fullName>Protein ZIP2</fullName>
    </recommendedName>
    <alternativeName>
        <fullName>Zipping up meiotic chromosomes protein 2</fullName>
    </alternativeName>
</protein>
<dbReference type="EMBL" id="CR380954">
    <property type="protein sequence ID" value="CAG60063.1"/>
    <property type="molecule type" value="Genomic_DNA"/>
</dbReference>
<dbReference type="RefSeq" id="XP_447130.1">
    <property type="nucleotide sequence ID" value="XM_447130.1"/>
</dbReference>
<dbReference type="SMR" id="Q6FRL4"/>
<dbReference type="FunCoup" id="Q6FRL4">
    <property type="interactions" value="120"/>
</dbReference>
<dbReference type="STRING" id="284593.Q6FRL4"/>
<dbReference type="EnsemblFungi" id="CAGL0H07645g-T">
    <property type="protein sequence ID" value="CAGL0H07645g-T-p1"/>
    <property type="gene ID" value="CAGL0H07645g"/>
</dbReference>
<dbReference type="KEGG" id="cgr:2888864"/>
<dbReference type="CGD" id="CAL0131522">
    <property type="gene designation" value="CAGL0H07645g"/>
</dbReference>
<dbReference type="VEuPathDB" id="FungiDB:CAGL0H07645g"/>
<dbReference type="eggNOG" id="ENOG502S02Z">
    <property type="taxonomic scope" value="Eukaryota"/>
</dbReference>
<dbReference type="HOGENOM" id="CLU_385036_0_0_1"/>
<dbReference type="InParanoid" id="Q6FRL4"/>
<dbReference type="OMA" id="NTSMIPH"/>
<dbReference type="Proteomes" id="UP000002428">
    <property type="component" value="Chromosome H"/>
</dbReference>
<dbReference type="GO" id="GO:0005694">
    <property type="term" value="C:chromosome"/>
    <property type="evidence" value="ECO:0007669"/>
    <property type="project" value="UniProtKB-SubCell"/>
</dbReference>
<dbReference type="GO" id="GO:0005634">
    <property type="term" value="C:nucleus"/>
    <property type="evidence" value="ECO:0007669"/>
    <property type="project" value="UniProtKB-SubCell"/>
</dbReference>
<dbReference type="GO" id="GO:0003677">
    <property type="term" value="F:DNA binding"/>
    <property type="evidence" value="ECO:0007669"/>
    <property type="project" value="UniProtKB-KW"/>
</dbReference>
<dbReference type="GO" id="GO:0000166">
    <property type="term" value="F:nucleotide binding"/>
    <property type="evidence" value="ECO:0007669"/>
    <property type="project" value="UniProtKB-KW"/>
</dbReference>
<dbReference type="GO" id="GO:0007059">
    <property type="term" value="P:chromosome segregation"/>
    <property type="evidence" value="ECO:0007669"/>
    <property type="project" value="UniProtKB-KW"/>
</dbReference>
<dbReference type="GO" id="GO:0051321">
    <property type="term" value="P:meiotic cell cycle"/>
    <property type="evidence" value="ECO:0007669"/>
    <property type="project" value="UniProtKB-KW"/>
</dbReference>